<name>YPD1_CANAL</name>
<dbReference type="EMBL" id="AF213247">
    <property type="protein sequence ID" value="AAG01679.1"/>
    <property type="molecule type" value="Genomic_DNA"/>
</dbReference>
<dbReference type="EMBL" id="CP017623">
    <property type="protein sequence ID" value="AOW26376.1"/>
    <property type="molecule type" value="Genomic_DNA"/>
</dbReference>
<dbReference type="RefSeq" id="XP_713887.1">
    <property type="nucleotide sequence ID" value="XM_708794.1"/>
</dbReference>
<dbReference type="SASBDB" id="Q59WC6"/>
<dbReference type="SMR" id="Q59WC6"/>
<dbReference type="FunCoup" id="Q59WC6">
    <property type="interactions" value="114"/>
</dbReference>
<dbReference type="STRING" id="237561.Q59WC6"/>
<dbReference type="EnsemblFungi" id="C1_07240W_A-T">
    <property type="protein sequence ID" value="C1_07240W_A-T-p1"/>
    <property type="gene ID" value="C1_07240W_A"/>
</dbReference>
<dbReference type="GeneID" id="3644458"/>
<dbReference type="KEGG" id="cal:CAALFM_C107240WA"/>
<dbReference type="CGD" id="CAL0000174022">
    <property type="gene designation" value="YPD1"/>
</dbReference>
<dbReference type="VEuPathDB" id="FungiDB:C1_07240W_A"/>
<dbReference type="eggNOG" id="KOG4747">
    <property type="taxonomic scope" value="Eukaryota"/>
</dbReference>
<dbReference type="HOGENOM" id="CLU_085158_2_0_1"/>
<dbReference type="InParanoid" id="Q59WC6"/>
<dbReference type="OMA" id="LVEWSVF"/>
<dbReference type="OrthoDB" id="1673781at2759"/>
<dbReference type="PRO" id="PR:Q59WC6"/>
<dbReference type="Proteomes" id="UP000000559">
    <property type="component" value="Chromosome 1"/>
</dbReference>
<dbReference type="GO" id="GO:0005737">
    <property type="term" value="C:cytoplasm"/>
    <property type="evidence" value="ECO:0000318"/>
    <property type="project" value="GO_Central"/>
</dbReference>
<dbReference type="GO" id="GO:0005829">
    <property type="term" value="C:cytosol"/>
    <property type="evidence" value="ECO:0000314"/>
    <property type="project" value="CGD"/>
</dbReference>
<dbReference type="GO" id="GO:0005634">
    <property type="term" value="C:nucleus"/>
    <property type="evidence" value="ECO:0000314"/>
    <property type="project" value="CGD"/>
</dbReference>
<dbReference type="GO" id="GO:0009927">
    <property type="term" value="F:histidine phosphotransfer kinase activity"/>
    <property type="evidence" value="ECO:0000318"/>
    <property type="project" value="GO_Central"/>
</dbReference>
<dbReference type="GO" id="GO:0043424">
    <property type="term" value="F:protein histidine kinase binding"/>
    <property type="evidence" value="ECO:0000318"/>
    <property type="project" value="GO_Central"/>
</dbReference>
<dbReference type="GO" id="GO:0016772">
    <property type="term" value="F:transferase activity, transferring phosphorus-containing groups"/>
    <property type="evidence" value="ECO:0000316"/>
    <property type="project" value="CGD"/>
</dbReference>
<dbReference type="GO" id="GO:0007234">
    <property type="term" value="P:osmosensory signaling via phosphorelay pathway"/>
    <property type="evidence" value="ECO:0000315"/>
    <property type="project" value="CGD"/>
</dbReference>
<dbReference type="GO" id="GO:0000160">
    <property type="term" value="P:phosphorelay signal transduction system"/>
    <property type="evidence" value="ECO:0000315"/>
    <property type="project" value="CGD"/>
</dbReference>
<dbReference type="GO" id="GO:1900407">
    <property type="term" value="P:regulation of cellular response to oxidative stress"/>
    <property type="evidence" value="ECO:0000315"/>
    <property type="project" value="CGD"/>
</dbReference>
<dbReference type="CDD" id="cd00088">
    <property type="entry name" value="HPT"/>
    <property type="match status" value="1"/>
</dbReference>
<dbReference type="FunFam" id="1.20.120.160:FF:000010">
    <property type="entry name" value="Phosphorelay intermediate protein YPD1"/>
    <property type="match status" value="1"/>
</dbReference>
<dbReference type="Gene3D" id="1.20.120.160">
    <property type="entry name" value="HPT domain"/>
    <property type="match status" value="1"/>
</dbReference>
<dbReference type="InterPro" id="IPR045871">
    <property type="entry name" value="AHP1-5/YPD1"/>
</dbReference>
<dbReference type="InterPro" id="IPR036641">
    <property type="entry name" value="HPT_dom_sf"/>
</dbReference>
<dbReference type="InterPro" id="IPR008207">
    <property type="entry name" value="Sig_transdc_His_kin_Hpt_dom"/>
</dbReference>
<dbReference type="PANTHER" id="PTHR28242">
    <property type="entry name" value="PHOSPHORELAY INTERMEDIATE PROTEIN YPD1"/>
    <property type="match status" value="1"/>
</dbReference>
<dbReference type="PANTHER" id="PTHR28242:SF52">
    <property type="entry name" value="PHOSPHORELAY INTERMEDIATE PROTEIN YPD1"/>
    <property type="match status" value="1"/>
</dbReference>
<dbReference type="Pfam" id="PF01627">
    <property type="entry name" value="Hpt"/>
    <property type="match status" value="1"/>
</dbReference>
<dbReference type="SMART" id="SM00073">
    <property type="entry name" value="HPT"/>
    <property type="match status" value="1"/>
</dbReference>
<dbReference type="SUPFAM" id="SSF47226">
    <property type="entry name" value="Histidine-containing phosphotransfer domain, HPT domain"/>
    <property type="match status" value="1"/>
</dbReference>
<dbReference type="PROSITE" id="PS50894">
    <property type="entry name" value="HPT"/>
    <property type="match status" value="1"/>
</dbReference>
<protein>
    <recommendedName>
        <fullName>Phosphorelay intermediate protein YPD1</fullName>
    </recommendedName>
</protein>
<comment type="function">
    <text evidence="4">Phosphorelay intermediate protein that is part of the bifurcated SLN1-YPD1-SKN7/SSK1 two-component regulatory system, which controls activity of the HOG1 pathway and gene expression in response to oxidative stress and probably to changes in the osmolarity of the extracellular environment. Catalyzes the phosphoryl group transfer from the membrane-bound histidine kinase SLN1 to two distinct response regulators SSK1 and SKN7.</text>
</comment>
<comment type="subcellular location">
    <subcellularLocation>
        <location evidence="1">Cytoplasm</location>
    </subcellularLocation>
    <subcellularLocation>
        <location evidence="1">Nucleus</location>
    </subcellularLocation>
</comment>
<comment type="similarity">
    <text evidence="5">Belongs to the YPD1 family.</text>
</comment>
<feature type="chain" id="PRO_0000425804" description="Phosphorelay intermediate protein YPD1">
    <location>
        <begin position="1"/>
        <end position="184"/>
    </location>
</feature>
<feature type="domain" description="HPt" evidence="2">
    <location>
        <begin position="30"/>
        <end position="125"/>
    </location>
</feature>
<feature type="region of interest" description="Disordered" evidence="3">
    <location>
        <begin position="120"/>
        <end position="152"/>
    </location>
</feature>
<feature type="compositionally biased region" description="Low complexity" evidence="3">
    <location>
        <begin position="125"/>
        <end position="147"/>
    </location>
</feature>
<feature type="modified residue" description="Phosphohistidine" evidence="2">
    <location>
        <position position="69"/>
    </location>
</feature>
<proteinExistence type="inferred from homology"/>
<sequence>MSEDKLQKLQDSGLVDWAVFSEIVTMDEDEEGFSKSLVEVFVSQVEETFEEIDKYLKEKNLEKLSSSGHFLKGSAAALGLTKISNQCERIQNYGHKINFDNFQLEDIKTKGDSAVSAENVAVNDGETNPENGSNGNETSNNKTNTSNIPDESSDDFWIALIEDALAKARDGFDQSRRALDEYYE</sequence>
<reference key="1">
    <citation type="journal article" date="2000" name="Yeast">
        <title>Identification of YPD1, a gene of Candida albicans which encodes a two-component phosphohistidine intermediate protein.</title>
        <authorList>
            <person name="Calera J.A."/>
            <person name="Herman D."/>
            <person name="Calderone R."/>
        </authorList>
    </citation>
    <scope>NUCLEOTIDE SEQUENCE [GENOMIC DNA]</scope>
    <source>
        <strain>SC5314 / ATCC MYA-2876</strain>
    </source>
</reference>
<reference key="2">
    <citation type="journal article" date="2004" name="Proc. Natl. Acad. Sci. U.S.A.">
        <title>The diploid genome sequence of Candida albicans.</title>
        <authorList>
            <person name="Jones T."/>
            <person name="Federspiel N.A."/>
            <person name="Chibana H."/>
            <person name="Dungan J."/>
            <person name="Kalman S."/>
            <person name="Magee B.B."/>
            <person name="Newport G."/>
            <person name="Thorstenson Y.R."/>
            <person name="Agabian N."/>
            <person name="Magee P.T."/>
            <person name="Davis R.W."/>
            <person name="Scherer S."/>
        </authorList>
    </citation>
    <scope>NUCLEOTIDE SEQUENCE [LARGE SCALE GENOMIC DNA]</scope>
    <source>
        <strain>SC5314 / ATCC MYA-2876</strain>
    </source>
</reference>
<reference key="3">
    <citation type="journal article" date="2007" name="Genome Biol.">
        <title>Assembly of the Candida albicans genome into sixteen supercontigs aligned on the eight chromosomes.</title>
        <authorList>
            <person name="van het Hoog M."/>
            <person name="Rast T.J."/>
            <person name="Martchenko M."/>
            <person name="Grindle S."/>
            <person name="Dignard D."/>
            <person name="Hogues H."/>
            <person name="Cuomo C."/>
            <person name="Berriman M."/>
            <person name="Scherer S."/>
            <person name="Magee B.B."/>
            <person name="Whiteway M."/>
            <person name="Chibana H."/>
            <person name="Nantel A."/>
            <person name="Magee P.T."/>
        </authorList>
    </citation>
    <scope>GENOME REANNOTATION</scope>
    <source>
        <strain>SC5314 / ATCC MYA-2876</strain>
    </source>
</reference>
<reference key="4">
    <citation type="journal article" date="2013" name="Genome Biol.">
        <title>Assembly of a phased diploid Candida albicans genome facilitates allele-specific measurements and provides a simple model for repeat and indel structure.</title>
        <authorList>
            <person name="Muzzey D."/>
            <person name="Schwartz K."/>
            <person name="Weissman J.S."/>
            <person name="Sherlock G."/>
        </authorList>
    </citation>
    <scope>NUCLEOTIDE SEQUENCE [LARGE SCALE GENOMIC DNA]</scope>
    <scope>GENOME REANNOTATION</scope>
    <source>
        <strain>SC5314 / ATCC MYA-2876</strain>
    </source>
</reference>
<reference key="5">
    <citation type="journal article" date="2006" name="Mol. Microbiol.">
        <title>Functional studies of the Ssk1p response regulator protein of Candida albicans as determined by phenotypic analysis of receiver domain point mutants.</title>
        <authorList>
            <person name="Menon V."/>
            <person name="Li D."/>
            <person name="Chauhan N."/>
            <person name="Rajnarayanan R."/>
            <person name="Dubrovska A."/>
            <person name="West A.H."/>
            <person name="Calderone R."/>
        </authorList>
    </citation>
    <scope>FUNCTION</scope>
</reference>
<keyword id="KW-0963">Cytoplasm</keyword>
<keyword id="KW-0539">Nucleus</keyword>
<keyword id="KW-0597">Phosphoprotein</keyword>
<keyword id="KW-1185">Reference proteome</keyword>
<keyword id="KW-0346">Stress response</keyword>
<keyword id="KW-0902">Two-component regulatory system</keyword>
<accession>Q59WC6</accession>
<accession>A0A1D8PE42</accession>
<accession>G1UAK5</accession>
<accession>Q9HGV5</accession>
<organism>
    <name type="scientific">Candida albicans (strain SC5314 / ATCC MYA-2876)</name>
    <name type="common">Yeast</name>
    <dbReference type="NCBI Taxonomy" id="237561"/>
    <lineage>
        <taxon>Eukaryota</taxon>
        <taxon>Fungi</taxon>
        <taxon>Dikarya</taxon>
        <taxon>Ascomycota</taxon>
        <taxon>Saccharomycotina</taxon>
        <taxon>Pichiomycetes</taxon>
        <taxon>Debaryomycetaceae</taxon>
        <taxon>Candida/Lodderomyces clade</taxon>
        <taxon>Candida</taxon>
    </lineage>
</organism>
<gene>
    <name type="primary">YPD1</name>
    <name type="ordered locus">CAALFM_C107240WA</name>
    <name type="ORF">CaO19.11923</name>
    <name type="ORF">CaO19.4443</name>
</gene>
<evidence type="ECO:0000250" key="1"/>
<evidence type="ECO:0000255" key="2">
    <source>
        <dbReference type="PROSITE-ProRule" id="PRU00110"/>
    </source>
</evidence>
<evidence type="ECO:0000256" key="3">
    <source>
        <dbReference type="SAM" id="MobiDB-lite"/>
    </source>
</evidence>
<evidence type="ECO:0000269" key="4">
    <source>
    </source>
</evidence>
<evidence type="ECO:0000305" key="5"/>